<feature type="signal peptide" evidence="7">
    <location>
        <begin position="1"/>
        <end position="52"/>
    </location>
</feature>
<feature type="chain" id="PRO_0000387610" description="Temperature-sensitive hemagglutinin tsh autotransporter">
    <location>
        <begin position="53"/>
        <end position="1377"/>
    </location>
</feature>
<feature type="chain" id="PRO_0000026982" description="Temperature-sensitive hemagglutinin tsh">
    <location>
        <begin position="53"/>
        <end position="1100"/>
    </location>
</feature>
<feature type="chain" id="PRO_0000026983" description="Temperature-sensitive hemagglutinin tsh translocator">
    <location>
        <begin position="1101"/>
        <end position="1377"/>
    </location>
</feature>
<feature type="domain" description="Peptidase S6" evidence="3">
    <location>
        <begin position="53"/>
        <end position="302"/>
    </location>
</feature>
<feature type="domain" description="Autotransporter" evidence="2">
    <location>
        <begin position="1111"/>
        <end position="1377"/>
    </location>
</feature>
<feature type="active site" description="Charge relay system" evidence="3">
    <location>
        <position position="125"/>
    </location>
</feature>
<feature type="active site" description="Charge relay system" evidence="3">
    <location>
        <position position="153"/>
    </location>
</feature>
<feature type="active site" description="Charge relay system">
    <location>
        <position position="259"/>
    </location>
</feature>
<feature type="site" description="Cleavage">
    <location>
        <begin position="1100"/>
        <end position="1101"/>
    </location>
</feature>
<feature type="sequence variant" description="In strain: APEC13.">
    <original>G</original>
    <variation>W</variation>
    <location>
        <position position="175"/>
    </location>
</feature>
<feature type="sequence variant" description="In strain: APEC13.">
    <original>D</original>
    <variation>G</variation>
    <location>
        <position position="183"/>
    </location>
</feature>
<feature type="sequence variant" description="In strain: A2363 and APEC13.">
    <original>Q</original>
    <variation>K</variation>
    <location>
        <position position="209"/>
    </location>
</feature>
<feature type="sequence variant" description="In strain: A2363.">
    <original>F</original>
    <variation>S</variation>
    <location>
        <position position="326"/>
    </location>
</feature>
<feature type="sequence variant" description="In strain: A2363.">
    <original>H</original>
    <variation>Y</variation>
    <location>
        <position position="422"/>
    </location>
</feature>
<feature type="sequence variant" description="In strain: A2363.">
    <original>G</original>
    <variation>S</variation>
    <location>
        <position position="634"/>
    </location>
</feature>
<feature type="sequence variant" description="In strain: A2363.">
    <original>A</original>
    <variation>T</variation>
    <location>
        <position position="842"/>
    </location>
</feature>
<feature type="mutagenesis site" description="Loss of proteolytic activity. No effect on hemagglutination activity." evidence="5 7">
    <original>S</original>
    <variation>A</variation>
    <location>
        <position position="259"/>
    </location>
</feature>
<feature type="mutagenesis site" description="No effect either on extracellular secretion or on hemagglutination activity." evidence="5 7">
    <original>S</original>
    <variation>T</variation>
    <location>
        <position position="259"/>
    </location>
</feature>
<protein>
    <recommendedName>
        <fullName>Temperature-sensitive hemagglutinin tsh autotransporter</fullName>
        <ecNumber>3.4.21.-</ecNumber>
    </recommendedName>
    <alternativeName>
        <fullName>Autotransporter tsh</fullName>
    </alternativeName>
    <component>
        <recommendedName>
            <fullName>Temperature-sensitive hemagglutinin tsh</fullName>
        </recommendedName>
    </component>
    <component>
        <recommendedName>
            <fullName>Temperature-sensitive hemagglutinin tsh translocator</fullName>
        </recommendedName>
    </component>
</protein>
<accession>Q47692</accession>
<accession>Q6QE02</accession>
<accession>Q83WR9</accession>
<keyword id="KW-0998">Cell outer membrane</keyword>
<keyword id="KW-0903">Direct protein sequencing</keyword>
<keyword id="KW-0378">Hydrolase</keyword>
<keyword id="KW-0472">Membrane</keyword>
<keyword id="KW-0574">Periplasm</keyword>
<keyword id="KW-0614">Plasmid</keyword>
<keyword id="KW-0645">Protease</keyword>
<keyword id="KW-0964">Secreted</keyword>
<keyword id="KW-0720">Serine protease</keyword>
<keyword id="KW-0732">Signal</keyword>
<keyword id="KW-0812">Transmembrane</keyword>
<keyword id="KW-1134">Transmembrane beta strand</keyword>
<keyword id="KW-0843">Virulence</keyword>
<keyword id="KW-0865">Zymogen</keyword>
<name>TSH_ECOLX</name>
<geneLocation type="plasmid">
    <name>pAPEC-1</name>
</geneLocation>
<geneLocation type="plasmid">
    <name>pAPEC-O2-ColV</name>
</geneLocation>
<geneLocation type="plasmid">
    <name>pYA3432</name>
</geneLocation>
<gene>
    <name type="primary">tsh</name>
</gene>
<dbReference type="EC" id="3.4.21.-"/>
<dbReference type="EMBL" id="AF218073">
    <property type="protein sequence ID" value="AAA24698.1"/>
    <property type="molecule type" value="Genomic_DNA"/>
</dbReference>
<dbReference type="EMBL" id="AY545598">
    <property type="protein sequence ID" value="AAT35241.2"/>
    <property type="molecule type" value="Genomic_DNA"/>
</dbReference>
<dbReference type="EMBL" id="AY280856">
    <property type="protein sequence ID" value="AAP33781.1"/>
    <property type="molecule type" value="Genomic_DNA"/>
</dbReference>
<dbReference type="PIR" id="I54632">
    <property type="entry name" value="I54632"/>
</dbReference>
<dbReference type="RefSeq" id="WP_001080137.1">
    <property type="nucleotide sequence ID" value="NZ_WVUZ01000043.1"/>
</dbReference>
<dbReference type="RefSeq" id="WP_011402691.1">
    <property type="nucleotide sequence ID" value="NZ_JANIDU010000013.1"/>
</dbReference>
<dbReference type="RefSeq" id="YP_444132.1">
    <property type="nucleotide sequence ID" value="NC_007675.1"/>
</dbReference>
<dbReference type="SMR" id="Q47692"/>
<dbReference type="MEROPS" id="N04.001"/>
<dbReference type="MEROPS" id="S06.003"/>
<dbReference type="TCDB" id="1.B.12.4.2">
    <property type="family name" value="the autotransporter-1 (at-1) family"/>
</dbReference>
<dbReference type="GO" id="GO:0009279">
    <property type="term" value="C:cell outer membrane"/>
    <property type="evidence" value="ECO:0007669"/>
    <property type="project" value="UniProtKB-SubCell"/>
</dbReference>
<dbReference type="GO" id="GO:0009986">
    <property type="term" value="C:cell surface"/>
    <property type="evidence" value="ECO:0007669"/>
    <property type="project" value="UniProtKB-SubCell"/>
</dbReference>
<dbReference type="GO" id="GO:0005576">
    <property type="term" value="C:extracellular region"/>
    <property type="evidence" value="ECO:0007669"/>
    <property type="project" value="UniProtKB-SubCell"/>
</dbReference>
<dbReference type="GO" id="GO:0042597">
    <property type="term" value="C:periplasmic space"/>
    <property type="evidence" value="ECO:0007669"/>
    <property type="project" value="UniProtKB-SubCell"/>
</dbReference>
<dbReference type="GO" id="GO:0004252">
    <property type="term" value="F:serine-type endopeptidase activity"/>
    <property type="evidence" value="ECO:0007669"/>
    <property type="project" value="InterPro"/>
</dbReference>
<dbReference type="GO" id="GO:0006508">
    <property type="term" value="P:proteolysis"/>
    <property type="evidence" value="ECO:0007669"/>
    <property type="project" value="UniProtKB-KW"/>
</dbReference>
<dbReference type="CDD" id="cd01343">
    <property type="entry name" value="PL1_Passenger_AT"/>
    <property type="match status" value="1"/>
</dbReference>
<dbReference type="Gene3D" id="2.160.20.20">
    <property type="match status" value="1"/>
</dbReference>
<dbReference type="Gene3D" id="2.40.10.120">
    <property type="match status" value="1"/>
</dbReference>
<dbReference type="Gene3D" id="3.30.160.280">
    <property type="match status" value="1"/>
</dbReference>
<dbReference type="Gene3D" id="2.40.128.130">
    <property type="entry name" value="Autotransporter beta-domain"/>
    <property type="match status" value="1"/>
</dbReference>
<dbReference type="InterPro" id="IPR005546">
    <property type="entry name" value="Autotransporte_beta"/>
</dbReference>
<dbReference type="InterPro" id="IPR036709">
    <property type="entry name" value="Autotransporte_beta_dom_sf"/>
</dbReference>
<dbReference type="InterPro" id="IPR012332">
    <property type="entry name" value="Autotransporter_pectin_lyase_C"/>
</dbReference>
<dbReference type="InterPro" id="IPR050909">
    <property type="entry name" value="Bact_Autotransporter_VF"/>
</dbReference>
<dbReference type="InterPro" id="IPR006315">
    <property type="entry name" value="OM_autotransptr_brl_dom"/>
</dbReference>
<dbReference type="InterPro" id="IPR011050">
    <property type="entry name" value="Pectin_lyase_fold/virulence"/>
</dbReference>
<dbReference type="InterPro" id="IPR009003">
    <property type="entry name" value="Peptidase_S1_PA"/>
</dbReference>
<dbReference type="InterPro" id="IPR000710">
    <property type="entry name" value="Peptidase_S6"/>
</dbReference>
<dbReference type="InterPro" id="IPR030396">
    <property type="entry name" value="Peptidase_S6_dom"/>
</dbReference>
<dbReference type="NCBIfam" id="TIGR01414">
    <property type="entry name" value="autotrans_barl"/>
    <property type="match status" value="1"/>
</dbReference>
<dbReference type="PANTHER" id="PTHR12338:SF10">
    <property type="entry name" value="ADHESION AND PENETRATION PROTEIN AUTOTRANSPORTER"/>
    <property type="match status" value="1"/>
</dbReference>
<dbReference type="PANTHER" id="PTHR12338">
    <property type="entry name" value="AUTOTRANSPORTER"/>
    <property type="match status" value="1"/>
</dbReference>
<dbReference type="Pfam" id="PF03797">
    <property type="entry name" value="Autotransporter"/>
    <property type="match status" value="1"/>
</dbReference>
<dbReference type="Pfam" id="PF24078">
    <property type="entry name" value="Beta-sol_PIC_HAP1_IgA0_2nd"/>
    <property type="match status" value="1"/>
</dbReference>
<dbReference type="Pfam" id="PF02395">
    <property type="entry name" value="Peptidase_S6"/>
    <property type="match status" value="1"/>
</dbReference>
<dbReference type="PRINTS" id="PR00921">
    <property type="entry name" value="IGASERPTASE"/>
</dbReference>
<dbReference type="SMART" id="SM00869">
    <property type="entry name" value="Autotransporter"/>
    <property type="match status" value="1"/>
</dbReference>
<dbReference type="SUPFAM" id="SSF103515">
    <property type="entry name" value="Autotransporter"/>
    <property type="match status" value="1"/>
</dbReference>
<dbReference type="SUPFAM" id="SSF51126">
    <property type="entry name" value="Pectin lyase-like"/>
    <property type="match status" value="1"/>
</dbReference>
<dbReference type="SUPFAM" id="SSF50494">
    <property type="entry name" value="Trypsin-like serine proteases"/>
    <property type="match status" value="1"/>
</dbReference>
<dbReference type="PROSITE" id="PS51208">
    <property type="entry name" value="AUTOTRANSPORTER"/>
    <property type="match status" value="1"/>
</dbReference>
<dbReference type="PROSITE" id="PS51691">
    <property type="entry name" value="PEPTIDASE_S6"/>
    <property type="match status" value="1"/>
</dbReference>
<proteinExistence type="evidence at protein level"/>
<evidence type="ECO:0000250" key="1"/>
<evidence type="ECO:0000255" key="2">
    <source>
        <dbReference type="PROSITE-ProRule" id="PRU00556"/>
    </source>
</evidence>
<evidence type="ECO:0000255" key="3">
    <source>
        <dbReference type="PROSITE-ProRule" id="PRU01028"/>
    </source>
</evidence>
<evidence type="ECO:0000269" key="4">
    <source>
    </source>
</evidence>
<evidence type="ECO:0000269" key="5">
    <source>
    </source>
</evidence>
<evidence type="ECO:0000269" key="6">
    <source>
    </source>
</evidence>
<evidence type="ECO:0000269" key="7">
    <source>
    </source>
</evidence>
<evidence type="ECO:0000305" key="8"/>
<comment type="function">
    <text evidence="4 5 6 7">Contributes to the development of lesions and deposition of fibrin in the avian air sacs. It can act both as an adhesin and as a serine protease. Agglutinates erythrocytes while in contact with the extracellular surface of the bacterial cells. Can adhere to purified hemoglobin and bind with great efficiency to extracellular matrix proteins. Cleaves casein and exhibits mucinolytic activity.</text>
</comment>
<comment type="biophysicochemical properties">
    <temperatureDependence>
        <text>Optimum temperature is 26 degrees Celsius for hemagglutination activity.</text>
    </temperatureDependence>
</comment>
<comment type="subcellular location">
    <molecule>Temperature-sensitive hemagglutinin tsh autotransporter</molecule>
    <subcellularLocation>
        <location evidence="1">Periplasm</location>
    </subcellularLocation>
</comment>
<comment type="subcellular location">
    <molecule>Temperature-sensitive hemagglutinin tsh</molecule>
    <subcellularLocation>
        <location>Secreted</location>
    </subcellularLocation>
    <subcellularLocation>
        <location>Cell surface</location>
    </subcellularLocation>
</comment>
<comment type="subcellular location">
    <molecule>Temperature-sensitive hemagglutinin tsh translocator</molecule>
    <subcellularLocation>
        <location evidence="1">Cell outer membrane</location>
        <topology evidence="1">Multi-pass membrane protein</topology>
    </subcellularLocation>
    <text evidence="1">The cleaved C-terminal fragment (autotransporter domain) is localized in the outer membrane.</text>
</comment>
<comment type="domain">
    <text>Adhesive and proteolytic functions of tsh lie in different domains of the protein.</text>
</comment>
<comment type="domain">
    <text evidence="1">The signal peptide, cleaved at the inner membrane, guides the autotransporter protein to the periplasmic space. Then, insertion of the C-terminal translocator domain in the outer membrane forms a hydrophilic pore for the translocation of the passenger domain to the bacterial cell surface, with subsequent cleavage (By similarity).</text>
</comment>
<comment type="PTM">
    <text evidence="8">The C-terminus is blocked.</text>
</comment>
<comment type="PTM">
    <text>Cleaved to release the mature protein from the outer membrane.</text>
</comment>
<sequence length="1377" mass="148227">MNRIYSLRYSAVARGFIAVSEFARKCVHKSVRRLCFPVLLLIPVLFSAGSLAGTVNNELGYQLFRDFAENKGMFRPGATNIAIYNKQGEFVGTLDKAAMPDFSAVDSEIGVATLINPQYIASVKHNGGYTNVSFGDGENRYNIVDRNNAPSLDFHAPRLDKLVTEVAPTAVTAQGAVAGAYLDKERYPVFYRLGSGTQYIKDSNGQLTQMGGAYSWLTGGTVGSLSSYQNGEMISTSSGLVFDYKLNGAMPIYGEAGDSGSPLFAFDTVQNKWVLVGVLTAGNGAGGRGNNWAVIPLDFIGQKFNEDNDAPVTFRTSEGGALEWSFNSSTGAGALTQGTTTYAMHGQQGNDLNAGKNLIFQGQNGQINLKDSVSQGAGSLTFRDNYTVTTSNGSTWTGAGIVVDNGVSVNWQVNGVKGDNLHKIGEGTLTVQGTGINEGGLKVGDGKVVLNQQADNKGQVQAFSSVNIASGRPTVVLTDERQVNPDTVSWGYRGGTLDVNGNSLTFHQLKAADYGAVLANNVDKRATITLDYALRADKVALNGWSESGKGTAGNLYKYNNPYTNTTDYFILKQSTYGYFPTDQSSNATWEFVGHSQGDAQKLVADRFNTAGYLFHGQLKGNLNVDNRLPEGVTGALVMDGAADISGTFTQENGRLTLQGHPVIHAYNTQSVADKLAASGDHSVLTQPTSFSQEDWENRSFTFDRLSLKNTDFGLGRNATLNTTIQADNSSVTLGDSRVFIDKNDGQGTAFTLEEGTSVATKDADKSVFNGTVNLDNQSVLNINDIFNGGIQANNSTVNISSDSAVLGNSTLTSTALNLNKGANALASQSFVSDGPVNISDAALSLNSRPDEVSHTLLPVYDYAGSWNLKGDDARLNVGPYSMLSGNINVQDKGTVTLGGEGELSPDLTLQNQMLYSLFNGYRNIWSGSLNAPDATVSMTDTQWSMNGNSTAGNMKLNRTIVGFNGGTSPFTTLTTDNLDAVQSAFVMRTDLNKADKLVINKSATGHDNSIWVNFLKKPSNKDTLDIPLVSAPEATADNLFRASTRVVGFSDVTPILSVRKEDGKKEWVLDGYQVARNDGQGKAAATFMHISYNNFITEVNNLNKRMGDLRDINGEAGTWVRLLNGSGSADGGFTDHYTLLQMGADRKHELGSMDLFTGVMATYTDTDASADLYSGKTKSWGGGFYASGLFRSGAYFDVIAKYIHNENKYDLNFAGAGKQNFRSHSLYAGAEVGYRYHLTDTTFVEPQAELVWGRLQGQTFNWNDSGMDVSMRRNSVNPLVGRTGVVSGKTFSGKDWSLTARAGLHYEFDLTDSADVHLKDAAGEHQINGRKDSRMLYGVGLNARFGDNTRLGLEVERSAFGKYNTDDAINANIRYSF</sequence>
<organism>
    <name type="scientific">Escherichia coli</name>
    <dbReference type="NCBI Taxonomy" id="562"/>
    <lineage>
        <taxon>Bacteria</taxon>
        <taxon>Pseudomonadati</taxon>
        <taxon>Pseudomonadota</taxon>
        <taxon>Gammaproteobacteria</taxon>
        <taxon>Enterobacterales</taxon>
        <taxon>Enterobacteriaceae</taxon>
        <taxon>Escherichia</taxon>
    </lineage>
</organism>
<reference key="1">
    <citation type="journal article" date="1994" name="Infect. Immun.">
        <title>Isolation and characterization of a gene involved in hemagglutination by an avian pathogenic Escherichia coli strain.</title>
        <authorList>
            <person name="Provence D.L."/>
            <person name="Curtiss R. III"/>
        </authorList>
    </citation>
    <scope>NUCLEOTIDE SEQUENCE [GENOMIC DNA]</scope>
    <scope>FUNCTION</scope>
    <source>
        <strain>O78:K80:H9 / chi7122 / APEC</strain>
        <plasmid>pAPEC-1</plasmid>
    </source>
</reference>
<reference key="2">
    <citation type="journal article" date="2000" name="Infect. Immun.">
        <title>Relationship between the Tsh autotransporter and pathogenicity of avian Escherichia coli and localization and analysis of the tsh genetic region.</title>
        <authorList>
            <person name="Dozois C.M."/>
            <person name="Dho-Moulin M."/>
            <person name="Bree A."/>
            <person name="Fairbrother J.M."/>
            <person name="Desautels C."/>
            <person name="Curtiss R. III"/>
        </authorList>
    </citation>
    <scope>NUCLEOTIDE SEQUENCE [GENOMIC DNA]</scope>
    <scope>FUNCTION</scope>
    <source>
        <strain>O78:K80:H9 / chi7122 / APEC</strain>
        <plasmid>pAPEC-1</plasmid>
    </source>
</reference>
<reference key="3">
    <citation type="submission" date="2005-02" db="EMBL/GenBank/DDBJ databases">
        <title>Putative virulence region of a ColV plasmid from an avian pathogenic Escherichia coli (APEC).</title>
        <authorList>
            <person name="Johnson T.J."/>
            <person name="Nolan L.K."/>
        </authorList>
    </citation>
    <scope>NUCLEOTIDE SEQUENCE [GENOMIC DNA]</scope>
    <source>
        <strain>A2363 / APEC</strain>
        <plasmid>pAPEC-O2-ColV</plasmid>
    </source>
</reference>
<reference key="4">
    <citation type="submission" date="2003-04" db="EMBL/GenBank/DDBJ databases">
        <title>Cloning and characterization of the tsh gene from an avian pathogenic Escherichia coli strain.</title>
        <authorList>
            <person name="Simoes R.C."/>
            <person name="Delicato E.R."/>
            <person name="Gaziri L.C.J."/>
            <person name="Vidotto M.C."/>
        </authorList>
    </citation>
    <scope>NUCLEOTIDE SEQUENCE [GENOMIC DNA] OF 1-531</scope>
    <source>
        <strain>APEC13 / APEC</strain>
    </source>
</reference>
<reference key="5">
    <citation type="journal article" date="1999" name="Infect. Immun.">
        <title>Characterization of the avian pathogenic Escherichia coli hemagglutinin Tsh, a member of the immunoglobulin A protease-type family of autotransporters.</title>
        <authorList>
            <person name="Stathopoulos C."/>
            <person name="Provence D.L."/>
            <person name="Curtiss R. III"/>
        </authorList>
    </citation>
    <scope>PROTEIN SEQUENCE OF 53-60 AND 1101-1111</scope>
    <scope>FUNCTION</scope>
    <scope>SUBCELLULAR LOCATION</scope>
    <scope>MUTAGENESIS OF SER-259</scope>
    <source>
        <strain>O78:K80:H9 / chi7122 / APEC</strain>
        <plasmid>pAPEC-1</plasmid>
    </source>
</reference>
<reference key="6">
    <citation type="journal article" date="2004" name="Infect. Immun.">
        <title>Functional analysis of the Tsh autotransporter from an avian pathogenic Escherichia coli strain.</title>
        <authorList>
            <person name="Kostakioti M."/>
            <person name="Stathopoulos C."/>
        </authorList>
    </citation>
    <scope>FUNCTION</scope>
    <scope>MUTAGENESIS OF SER-259</scope>
    <source>
        <strain>RW193</strain>
        <plasmid>pYA3432</plasmid>
    </source>
</reference>